<keyword id="KW-0426">Late protein</keyword>
<keyword id="KW-0472">Membrane</keyword>
<keyword id="KW-1185">Reference proteome</keyword>
<keyword id="KW-0812">Transmembrane</keyword>
<keyword id="KW-1133">Transmembrane helix</keyword>
<keyword id="KW-1162">Viral penetration into host cytoplasm</keyword>
<keyword id="KW-0946">Virion</keyword>
<keyword id="KW-1160">Virus entry into host cell</keyword>
<gene>
    <name type="primary">OPG078</name>
    <name type="ordered locus">VACWR071</name>
    <name type="ORF">I2L</name>
</gene>
<organismHost>
    <name type="scientific">Bos taurus</name>
    <name type="common">Bovine</name>
    <dbReference type="NCBI Taxonomy" id="9913"/>
</organismHost>
<organism>
    <name type="scientific">Vaccinia virus (strain Western Reserve)</name>
    <name type="common">VACV</name>
    <name type="synonym">Vaccinia virus (strain WR)</name>
    <dbReference type="NCBI Taxonomy" id="10254"/>
    <lineage>
        <taxon>Viruses</taxon>
        <taxon>Varidnaviria</taxon>
        <taxon>Bamfordvirae</taxon>
        <taxon>Nucleocytoviricota</taxon>
        <taxon>Pokkesviricetes</taxon>
        <taxon>Chitovirales</taxon>
        <taxon>Poxviridae</taxon>
        <taxon>Chordopoxvirinae</taxon>
        <taxon>Orthopoxvirus</taxon>
        <taxon>Vaccinia virus</taxon>
    </lineage>
</organism>
<sequence>MDKLYAAIFGVFMGSPEDDLTDFIEIVKSVLSDEKTVTSTNNTGCWGWYWLIIIFFIVLILLLLIYLYLKVVW</sequence>
<name>PG078_VACCW</name>
<dbReference type="EMBL" id="AY243312">
    <property type="protein sequence ID" value="AAO89350.1"/>
    <property type="molecule type" value="Genomic_DNA"/>
</dbReference>
<dbReference type="EMBL" id="J03399">
    <property type="protein sequence ID" value="AAB59804.1"/>
    <property type="molecule type" value="Genomic_DNA"/>
</dbReference>
<dbReference type="PIR" id="B29889">
    <property type="entry name" value="WZVZI2"/>
</dbReference>
<dbReference type="RefSeq" id="YP_232953.1">
    <property type="nucleotide sequence ID" value="NC_006998.1"/>
</dbReference>
<dbReference type="TCDB" id="1.G.11.1.1">
    <property type="family name" value="the poxvirus cell entry protein complex (pep-c) family"/>
</dbReference>
<dbReference type="DNASU" id="3707604"/>
<dbReference type="GeneID" id="3707604"/>
<dbReference type="KEGG" id="vg:3707604"/>
<dbReference type="Proteomes" id="UP000000344">
    <property type="component" value="Genome"/>
</dbReference>
<dbReference type="GO" id="GO:0016020">
    <property type="term" value="C:membrane"/>
    <property type="evidence" value="ECO:0007669"/>
    <property type="project" value="UniProtKB-KW"/>
</dbReference>
<dbReference type="GO" id="GO:0055036">
    <property type="term" value="C:virion membrane"/>
    <property type="evidence" value="ECO:0007669"/>
    <property type="project" value="UniProtKB-SubCell"/>
</dbReference>
<dbReference type="GO" id="GO:0046718">
    <property type="term" value="P:symbiont entry into host cell"/>
    <property type="evidence" value="ECO:0007669"/>
    <property type="project" value="UniProtKB-KW"/>
</dbReference>
<dbReference type="InterPro" id="IPR009175">
    <property type="entry name" value="Poxvirus_I2"/>
</dbReference>
<dbReference type="Pfam" id="PF12575">
    <property type="entry name" value="Pox_EPC_I2-L1"/>
    <property type="match status" value="1"/>
</dbReference>
<dbReference type="PIRSF" id="PIRSF003766">
    <property type="entry name" value="VAC_I2L"/>
    <property type="match status" value="1"/>
</dbReference>
<accession>P68606</accession>
<accession>P12922</accession>
<accession>Q76ZV1</accession>
<comment type="function">
    <text evidence="2">Late protein which probably plays a role in virus entry into the host cell.</text>
</comment>
<comment type="subcellular location">
    <subcellularLocation>
        <location evidence="4">Virion membrane</location>
        <topology evidence="4">Single-pass membrane protein</topology>
    </subcellularLocation>
    <text evidence="2">Component of the membrane of the mature virion.</text>
</comment>
<comment type="induction">
    <text evidence="2 3">Expressed in the late phase of the viral replicative cycle.</text>
</comment>
<comment type="similarity">
    <text evidence="4">Belongs to the orthopoxvirus OPG078 family.</text>
</comment>
<protein>
    <recommendedName>
        <fullName>Protein OPG078</fullName>
    </recommendedName>
    <alternativeName>
        <fullName>Protein I2</fullName>
    </alternativeName>
</protein>
<evidence type="ECO:0000255" key="1"/>
<evidence type="ECO:0000269" key="2">
    <source>
    </source>
</evidence>
<evidence type="ECO:0000269" key="3">
    <source>
    </source>
</evidence>
<evidence type="ECO:0000305" key="4"/>
<proteinExistence type="evidence at transcript level"/>
<feature type="chain" id="PRO_0000099568" description="Protein OPG078">
    <location>
        <begin position="1"/>
        <end position="73"/>
    </location>
</feature>
<feature type="transmembrane region" description="Helical" evidence="1">
    <location>
        <begin position="49"/>
        <end position="69"/>
    </location>
</feature>
<reference key="1">
    <citation type="journal article" date="1988" name="J. Virol.">
        <title>Sequence and transcriptional analysis of the vaccinia virus HindIII I fragment.</title>
        <authorList>
            <person name="Schmitt J.F.C."/>
            <person name="Stunnenberg H.G."/>
        </authorList>
    </citation>
    <scope>NUCLEOTIDE SEQUENCE [GENOMIC DNA]</scope>
</reference>
<reference key="2">
    <citation type="submission" date="2003-02" db="EMBL/GenBank/DDBJ databases">
        <title>Sequencing of the coding region of Vaccinia-WR to an average 9-fold redundancy and an error rate of 0.16/10kb.</title>
        <authorList>
            <person name="Esposito J.J."/>
            <person name="Frace A.M."/>
            <person name="Sammons S.A."/>
            <person name="Olsen-Rasmussen M."/>
            <person name="Osborne J."/>
            <person name="Wohlhueter R."/>
        </authorList>
    </citation>
    <scope>NUCLEOTIDE SEQUENCE [LARGE SCALE GENOMIC DNA]</scope>
</reference>
<reference key="3">
    <citation type="journal article" date="2008" name="J. Virol.">
        <title>The vaccinia virus gene I2L encodes a membrane protein with an essential role in virion entry.</title>
        <authorList>
            <person name="Nichols R.J."/>
            <person name="Stanitsa E."/>
            <person name="Unger B."/>
            <person name="Traktman P."/>
        </authorList>
    </citation>
    <scope>FUNCTION</scope>
    <scope>INDUCTION</scope>
    <scope>SUBCELLULAR LOCATION</scope>
</reference>
<reference key="4">
    <citation type="journal article" date="2015" name="J. Virol.">
        <title>Deciphering poxvirus gene expression by RNA sequencing and ribosome profiling.</title>
        <authorList>
            <person name="Yang Z."/>
            <person name="Cao S."/>
            <person name="Martens C.A."/>
            <person name="Porcella S.F."/>
            <person name="Xie Z."/>
            <person name="Ma M."/>
            <person name="Shen B."/>
            <person name="Moss B."/>
        </authorList>
    </citation>
    <scope>INDUCTION</scope>
</reference>